<gene>
    <name evidence="10" type="primary">ULBP2</name>
    <name type="synonym">N2DL2</name>
    <name type="synonym">RAET1H</name>
    <name type="ORF">UNQ463/PRO791</name>
</gene>
<comment type="function">
    <text evidence="5">Binds and activates the KLRK1/NKG2D receptor, mediating natural killer cell cytotoxicity.</text>
</comment>
<comment type="subunit">
    <text evidence="5 6">Interacts with KLRK1/NKG2D (PubMed:11777960). Does not bind to beta2-microglobulin (PubMed:12782710).</text>
</comment>
<comment type="subunit">
    <text evidence="6">(Microbial infection) In CMV-infected cells, interacts with the viral glycoprotein UL16; this interaction causes ULBP2 retention in the endoplasmic reticulum and cis-Golgi and prevents binding to and activation of KLRK1/NKG2D, providing CMV with an immune evasion mechanism.</text>
</comment>
<comment type="interaction">
    <interactant intactId="EBI-3919993">
        <id>Q9BZM5</id>
    </interactant>
    <interactant intactId="EBI-12831318">
        <id>Q96Q80</id>
        <label>DERL3</label>
    </interactant>
    <organismsDiffer>false</organismsDiffer>
    <experiments>3</experiments>
</comment>
<comment type="interaction">
    <interactant intactId="EBI-3919993">
        <id>Q9BZM5</id>
    </interactant>
    <interactant intactId="EBI-458344">
        <id>P26718</id>
        <label>KLRK1</label>
    </interactant>
    <organismsDiffer>false</organismsDiffer>
    <experiments>6</experiments>
</comment>
<comment type="interaction">
    <interactant intactId="EBI-3919993">
        <id>Q9BZM5</id>
    </interactant>
    <interactant intactId="EBI-751210">
        <id>Q96EC8</id>
        <label>YIPF6</label>
    </interactant>
    <organismsDiffer>false</organismsDiffer>
    <experiments>3</experiments>
</comment>
<comment type="subcellular location">
    <subcellularLocation>
        <location evidence="3 6">Cell membrane</location>
        <topology evidence="3 4 6 7">Lipid-anchor</topology>
        <topology evidence="3 4 6 7">GPI-anchor</topology>
    </subcellularLocation>
    <subcellularLocation>
        <location evidence="6">Endoplasmic reticulum</location>
    </subcellularLocation>
    <subcellularLocation>
        <location evidence="4">Secreted</location>
    </subcellularLocation>
    <text evidence="6">In CMV-infected fibroblasts, detected in the endoplasmic reticulum/cis-Golgi.</text>
</comment>
<comment type="tissue specificity">
    <text evidence="4">Expressed in various types of cancer cell lines and in the fetus, but not in normal tissues.</text>
</comment>
<comment type="miscellaneous">
    <text>UL16-binding proteins (ULBPs) are unusual members of the extended MHC class I superfamily. They do not contain the alpha 3 domain and lack a transmembrane domain.</text>
</comment>
<comment type="similarity">
    <text evidence="8">Belongs to the MHC class I family.</text>
</comment>
<reference key="1">
    <citation type="journal article" date="2001" name="Immunity">
        <title>ULBPs, novel MHC class I-related molecules, bind to CMV glycoprotein UL16 and stimulate NK cytotoxicity through the NKG2D receptor.</title>
        <authorList>
            <person name="Cosman D."/>
            <person name="Mullberg J."/>
            <person name="Sutherland C.L."/>
            <person name="Chin W."/>
            <person name="Armitage R."/>
            <person name="Fanslow W."/>
            <person name="Kubin M."/>
            <person name="Chalupny N.J."/>
        </authorList>
    </citation>
    <scope>NUCLEOTIDE SEQUENCE [MRNA]</scope>
    <scope>SUBCELLULAR LOCATION</scope>
</reference>
<reference key="2">
    <citation type="journal article" date="2001" name="Biochem. Biophys. Res. Commun.">
        <title>A novel secreted tumor antigen with a glycosylphosphatidylinositol-anchored structure ubiquitously expressed in human cancers.</title>
        <authorList>
            <person name="Onda H."/>
            <person name="Ohkubo S."/>
            <person name="Shintani Y."/>
            <person name="Ogi K."/>
            <person name="Kikuchi K."/>
            <person name="Tanaka H."/>
            <person name="Yamamoto K."/>
            <person name="Tsuji I."/>
            <person name="Ishibashi Y."/>
            <person name="Yamada T."/>
            <person name="Kitada C."/>
            <person name="Suzuki N."/>
            <person name="Sawada H."/>
            <person name="Nishimura O."/>
            <person name="Fujino M."/>
        </authorList>
    </citation>
    <scope>NUCLEOTIDE SEQUENCE [MRNA]</scope>
    <scope>PROTEIN SEQUENCE OF N-TERMINUS</scope>
    <scope>SUBCELLULAR LOCATION</scope>
    <scope>TISSUE SPECIFICITY</scope>
    <scope>MUTAGENESIS OF 208-SER--GLY-210 AND 216-SER--GLY-218</scope>
    <source>
        <tissue>Endometrial tumor</tissue>
    </source>
</reference>
<reference key="3">
    <citation type="journal article" date="2002" name="Genomics">
        <title>A cluster of ten novel MHC class I related genes on human chromosome 6q24.2-q25.3.</title>
        <authorList>
            <person name="Radosavljevic M."/>
            <person name="Cuillerier B."/>
            <person name="Wilson M.J."/>
            <person name="Clement O."/>
            <person name="Wicker S."/>
            <person name="Gilfillan S."/>
            <person name="Beck S."/>
            <person name="Trowsdale J."/>
            <person name="Bahram S."/>
        </authorList>
    </citation>
    <scope>NUCLEOTIDE SEQUENCE [MRNA]</scope>
</reference>
<reference key="4">
    <citation type="journal article" date="2003" name="Genome Res.">
        <title>The secreted protein discovery initiative (SPDI), a large-scale effort to identify novel human secreted and transmembrane proteins: a bioinformatics assessment.</title>
        <authorList>
            <person name="Clark H.F."/>
            <person name="Gurney A.L."/>
            <person name="Abaya E."/>
            <person name="Baker K."/>
            <person name="Baldwin D.T."/>
            <person name="Brush J."/>
            <person name="Chen J."/>
            <person name="Chow B."/>
            <person name="Chui C."/>
            <person name="Crowley C."/>
            <person name="Currell B."/>
            <person name="Deuel B."/>
            <person name="Dowd P."/>
            <person name="Eaton D."/>
            <person name="Foster J.S."/>
            <person name="Grimaldi C."/>
            <person name="Gu Q."/>
            <person name="Hass P.E."/>
            <person name="Heldens S."/>
            <person name="Huang A."/>
            <person name="Kim H.S."/>
            <person name="Klimowski L."/>
            <person name="Jin Y."/>
            <person name="Johnson S."/>
            <person name="Lee J."/>
            <person name="Lewis L."/>
            <person name="Liao D."/>
            <person name="Mark M.R."/>
            <person name="Robbie E."/>
            <person name="Sanchez C."/>
            <person name="Schoenfeld J."/>
            <person name="Seshagiri S."/>
            <person name="Simmons L."/>
            <person name="Singh J."/>
            <person name="Smith V."/>
            <person name="Stinson J."/>
            <person name="Vagts A."/>
            <person name="Vandlen R.L."/>
            <person name="Watanabe C."/>
            <person name="Wieand D."/>
            <person name="Woods K."/>
            <person name="Xie M.-H."/>
            <person name="Yansura D.G."/>
            <person name="Yi S."/>
            <person name="Yu G."/>
            <person name="Yuan J."/>
            <person name="Zhang M."/>
            <person name="Zhang Z."/>
            <person name="Goddard A.D."/>
            <person name="Wood W.I."/>
            <person name="Godowski P.J."/>
            <person name="Gray A.M."/>
        </authorList>
    </citation>
    <scope>NUCLEOTIDE SEQUENCE [LARGE SCALE MRNA]</scope>
</reference>
<reference key="5">
    <citation type="journal article" date="2003" name="Nature">
        <title>The DNA sequence and analysis of human chromosome 6.</title>
        <authorList>
            <person name="Mungall A.J."/>
            <person name="Palmer S.A."/>
            <person name="Sims S.K."/>
            <person name="Edwards C.A."/>
            <person name="Ashurst J.L."/>
            <person name="Wilming L."/>
            <person name="Jones M.C."/>
            <person name="Horton R."/>
            <person name="Hunt S.E."/>
            <person name="Scott C.E."/>
            <person name="Gilbert J.G.R."/>
            <person name="Clamp M.E."/>
            <person name="Bethel G."/>
            <person name="Milne S."/>
            <person name="Ainscough R."/>
            <person name="Almeida J.P."/>
            <person name="Ambrose K.D."/>
            <person name="Andrews T.D."/>
            <person name="Ashwell R.I.S."/>
            <person name="Babbage A.K."/>
            <person name="Bagguley C.L."/>
            <person name="Bailey J."/>
            <person name="Banerjee R."/>
            <person name="Barker D.J."/>
            <person name="Barlow K.F."/>
            <person name="Bates K."/>
            <person name="Beare D.M."/>
            <person name="Beasley H."/>
            <person name="Beasley O."/>
            <person name="Bird C.P."/>
            <person name="Blakey S.E."/>
            <person name="Bray-Allen S."/>
            <person name="Brook J."/>
            <person name="Brown A.J."/>
            <person name="Brown J.Y."/>
            <person name="Burford D.C."/>
            <person name="Burrill W."/>
            <person name="Burton J."/>
            <person name="Carder C."/>
            <person name="Carter N.P."/>
            <person name="Chapman J.C."/>
            <person name="Clark S.Y."/>
            <person name="Clark G."/>
            <person name="Clee C.M."/>
            <person name="Clegg S."/>
            <person name="Cobley V."/>
            <person name="Collier R.E."/>
            <person name="Collins J.E."/>
            <person name="Colman L.K."/>
            <person name="Corby N.R."/>
            <person name="Coville G.J."/>
            <person name="Culley K.M."/>
            <person name="Dhami P."/>
            <person name="Davies J."/>
            <person name="Dunn M."/>
            <person name="Earthrowl M.E."/>
            <person name="Ellington A.E."/>
            <person name="Evans K.A."/>
            <person name="Faulkner L."/>
            <person name="Francis M.D."/>
            <person name="Frankish A."/>
            <person name="Frankland J."/>
            <person name="French L."/>
            <person name="Garner P."/>
            <person name="Garnett J."/>
            <person name="Ghori M.J."/>
            <person name="Gilby L.M."/>
            <person name="Gillson C.J."/>
            <person name="Glithero R.J."/>
            <person name="Grafham D.V."/>
            <person name="Grant M."/>
            <person name="Gribble S."/>
            <person name="Griffiths C."/>
            <person name="Griffiths M.N.D."/>
            <person name="Hall R."/>
            <person name="Halls K.S."/>
            <person name="Hammond S."/>
            <person name="Harley J.L."/>
            <person name="Hart E.A."/>
            <person name="Heath P.D."/>
            <person name="Heathcott R."/>
            <person name="Holmes S.J."/>
            <person name="Howden P.J."/>
            <person name="Howe K.L."/>
            <person name="Howell G.R."/>
            <person name="Huckle E."/>
            <person name="Humphray S.J."/>
            <person name="Humphries M.D."/>
            <person name="Hunt A.R."/>
            <person name="Johnson C.M."/>
            <person name="Joy A.A."/>
            <person name="Kay M."/>
            <person name="Keenan S.J."/>
            <person name="Kimberley A.M."/>
            <person name="King A."/>
            <person name="Laird G.K."/>
            <person name="Langford C."/>
            <person name="Lawlor S."/>
            <person name="Leongamornlert D.A."/>
            <person name="Leversha M."/>
            <person name="Lloyd C.R."/>
            <person name="Lloyd D.M."/>
            <person name="Loveland J.E."/>
            <person name="Lovell J."/>
            <person name="Martin S."/>
            <person name="Mashreghi-Mohammadi M."/>
            <person name="Maslen G.L."/>
            <person name="Matthews L."/>
            <person name="McCann O.T."/>
            <person name="McLaren S.J."/>
            <person name="McLay K."/>
            <person name="McMurray A."/>
            <person name="Moore M.J.F."/>
            <person name="Mullikin J.C."/>
            <person name="Niblett D."/>
            <person name="Nickerson T."/>
            <person name="Novik K.L."/>
            <person name="Oliver K."/>
            <person name="Overton-Larty E.K."/>
            <person name="Parker A."/>
            <person name="Patel R."/>
            <person name="Pearce A.V."/>
            <person name="Peck A.I."/>
            <person name="Phillimore B.J.C.T."/>
            <person name="Phillips S."/>
            <person name="Plumb R.W."/>
            <person name="Porter K.M."/>
            <person name="Ramsey Y."/>
            <person name="Ranby S.A."/>
            <person name="Rice C.M."/>
            <person name="Ross M.T."/>
            <person name="Searle S.M."/>
            <person name="Sehra H.K."/>
            <person name="Sheridan E."/>
            <person name="Skuce C.D."/>
            <person name="Smith S."/>
            <person name="Smith M."/>
            <person name="Spraggon L."/>
            <person name="Squares S.L."/>
            <person name="Steward C.A."/>
            <person name="Sycamore N."/>
            <person name="Tamlyn-Hall G."/>
            <person name="Tester J."/>
            <person name="Theaker A.J."/>
            <person name="Thomas D.W."/>
            <person name="Thorpe A."/>
            <person name="Tracey A."/>
            <person name="Tromans A."/>
            <person name="Tubby B."/>
            <person name="Wall M."/>
            <person name="Wallis J.M."/>
            <person name="West A.P."/>
            <person name="White S.S."/>
            <person name="Whitehead S.L."/>
            <person name="Whittaker H."/>
            <person name="Wild A."/>
            <person name="Willey D.J."/>
            <person name="Wilmer T.E."/>
            <person name="Wood J.M."/>
            <person name="Wray P.W."/>
            <person name="Wyatt J.C."/>
            <person name="Young L."/>
            <person name="Younger R.M."/>
            <person name="Bentley D.R."/>
            <person name="Coulson A."/>
            <person name="Durbin R.M."/>
            <person name="Hubbard T."/>
            <person name="Sulston J.E."/>
            <person name="Dunham I."/>
            <person name="Rogers J."/>
            <person name="Beck S."/>
        </authorList>
    </citation>
    <scope>NUCLEOTIDE SEQUENCE [LARGE SCALE GENOMIC DNA]</scope>
</reference>
<reference key="6">
    <citation type="submission" date="2005-09" db="EMBL/GenBank/DDBJ databases">
        <authorList>
            <person name="Mural R.J."/>
            <person name="Istrail S."/>
            <person name="Sutton G.G."/>
            <person name="Florea L."/>
            <person name="Halpern A.L."/>
            <person name="Mobarry C.M."/>
            <person name="Lippert R."/>
            <person name="Walenz B."/>
            <person name="Shatkay H."/>
            <person name="Dew I."/>
            <person name="Miller J.R."/>
            <person name="Flanigan M.J."/>
            <person name="Edwards N.J."/>
            <person name="Bolanos R."/>
            <person name="Fasulo D."/>
            <person name="Halldorsson B.V."/>
            <person name="Hannenhalli S."/>
            <person name="Turner R."/>
            <person name="Yooseph S."/>
            <person name="Lu F."/>
            <person name="Nusskern D.R."/>
            <person name="Shue B.C."/>
            <person name="Zheng X.H."/>
            <person name="Zhong F."/>
            <person name="Delcher A.L."/>
            <person name="Huson D.H."/>
            <person name="Kravitz S.A."/>
            <person name="Mouchard L."/>
            <person name="Reinert K."/>
            <person name="Remington K.A."/>
            <person name="Clark A.G."/>
            <person name="Waterman M.S."/>
            <person name="Eichler E.E."/>
            <person name="Adams M.D."/>
            <person name="Hunkapiller M.W."/>
            <person name="Myers E.W."/>
            <person name="Venter J.C."/>
        </authorList>
    </citation>
    <scope>NUCLEOTIDE SEQUENCE [LARGE SCALE GENOMIC DNA]</scope>
</reference>
<reference key="7">
    <citation type="journal article" date="2004" name="Genome Res.">
        <title>The status, quality, and expansion of the NIH full-length cDNA project: the Mammalian Gene Collection (MGC).</title>
        <authorList>
            <consortium name="The MGC Project Team"/>
        </authorList>
    </citation>
    <scope>NUCLEOTIDE SEQUENCE [LARGE SCALE MRNA]</scope>
    <source>
        <tissue>Skin</tissue>
    </source>
</reference>
<reference key="8">
    <citation type="journal article" date="2002" name="J. Immunol.">
        <title>UL16-binding proteins, novel MHC class I-related proteins, bind to NKG2D and activate multiple signaling pathways in primary NK cells.</title>
        <authorList>
            <person name="Sutherland C.L."/>
            <person name="Chalupny N.J."/>
            <person name="Schooley K."/>
            <person name="VandenBos T."/>
            <person name="Kubin M."/>
            <person name="Cosman D."/>
        </authorList>
    </citation>
    <scope>FUNCTION</scope>
    <scope>INTERACTION WITH KLRK1</scope>
</reference>
<reference key="9">
    <citation type="journal article" date="2003" name="J. Exp. Med.">
        <title>Human cytomegalovirus glycoprotein UL16 causes intracellular sequestration of NKG2D ligands, protecting against natural killer cell cytotoxicity.</title>
        <authorList>
            <person name="Dunn C."/>
            <person name="Chalupny N.J."/>
            <person name="Sutherland C.L."/>
            <person name="Dosch S."/>
            <person name="Sivakumar P.V."/>
            <person name="Johnson D.C."/>
            <person name="Cosman D."/>
        </authorList>
    </citation>
    <scope>INTERACTION WITH CMV UL16</scope>
    <scope>SUBCELLULAR LOCATION</scope>
</reference>
<reference key="10">
    <citation type="journal article" date="2003" name="Tissue Antigens">
        <title>NKG2D ligands: unconventional MHC class I-like molecules exploited by viruses and cancer.</title>
        <authorList>
            <person name="Cerwenka A."/>
            <person name="Lanier L.L."/>
        </authorList>
    </citation>
    <scope>REVIEW</scope>
</reference>
<reference evidence="13 14" key="11">
    <citation type="journal article" date="2023" name="Nat. Commun.">
        <title>Structures of liganded glycosylphosphatidylinositol transamidase illuminate GPI-AP biogenesis.</title>
        <authorList>
            <person name="Xu Y."/>
            <person name="Li T."/>
            <person name="Zhou Z."/>
            <person name="Hong J."/>
            <person name="Chao Y."/>
            <person name="Zhu Z."/>
            <person name="Zhang Y."/>
            <person name="Qu Q."/>
            <person name="Li D."/>
        </authorList>
    </citation>
    <scope>STRUCTURE BY ELECTRON MICROSCOPY (2.85 ANGSTROMS) OF 1-66; 84-176 AND 208-246 IN COMPLEX WITH GPAA1; PIGT; PIGU; PIGS AND PIGK</scope>
    <scope>GPI-ANCHOR AT SER-217</scope>
    <scope>MUTAGENESIS OF SER-216 AND SER-217</scope>
</reference>
<evidence type="ECO:0000250" key="1"/>
<evidence type="ECO:0000255" key="2"/>
<evidence type="ECO:0000269" key="3">
    <source>
    </source>
</evidence>
<evidence type="ECO:0000269" key="4">
    <source>
    </source>
</evidence>
<evidence type="ECO:0000269" key="5">
    <source>
    </source>
</evidence>
<evidence type="ECO:0000269" key="6">
    <source>
    </source>
</evidence>
<evidence type="ECO:0000269" key="7">
    <source>
    </source>
</evidence>
<evidence type="ECO:0000305" key="8"/>
<evidence type="ECO:0000305" key="9">
    <source>
    </source>
</evidence>
<evidence type="ECO:0000312" key="10">
    <source>
        <dbReference type="HGNC" id="HGNC:14894"/>
    </source>
</evidence>
<evidence type="ECO:0000312" key="11">
    <source>
        <dbReference type="PDB" id="8IMX"/>
    </source>
</evidence>
<evidence type="ECO:0000312" key="12">
    <source>
        <dbReference type="PDB" id="8IMY"/>
    </source>
</evidence>
<evidence type="ECO:0007744" key="13">
    <source>
        <dbReference type="PDB" id="8IMX"/>
    </source>
</evidence>
<evidence type="ECO:0007744" key="14">
    <source>
        <dbReference type="PDB" id="8IMY"/>
    </source>
</evidence>
<evidence type="ECO:0007829" key="15">
    <source>
        <dbReference type="PDB" id="8IMX"/>
    </source>
</evidence>
<protein>
    <recommendedName>
        <fullName evidence="8">UL16-binding protein 2</fullName>
    </recommendedName>
    <alternativeName>
        <fullName>ALCAN-alpha</fullName>
    </alternativeName>
    <alternativeName>
        <fullName>NKG2D ligand 2</fullName>
        <shortName>N2DL-2</shortName>
        <shortName>NKG2DL2</shortName>
    </alternativeName>
    <alternativeName>
        <fullName>Retinoic acid early transcript 1H</fullName>
    </alternativeName>
</protein>
<keyword id="KW-0002">3D-structure</keyword>
<keyword id="KW-1003">Cell membrane</keyword>
<keyword id="KW-0903">Direct protein sequencing</keyword>
<keyword id="KW-1015">Disulfide bond</keyword>
<keyword id="KW-0256">Endoplasmic reticulum</keyword>
<keyword id="KW-0325">Glycoprotein</keyword>
<keyword id="KW-0336">GPI-anchor</keyword>
<keyword id="KW-0945">Host-virus interaction</keyword>
<keyword id="KW-0391">Immunity</keyword>
<keyword id="KW-0449">Lipoprotein</keyword>
<keyword id="KW-0472">Membrane</keyword>
<keyword id="KW-1267">Proteomics identification</keyword>
<keyword id="KW-1185">Reference proteome</keyword>
<keyword id="KW-0964">Secreted</keyword>
<keyword id="KW-0732">Signal</keyword>
<accession>Q9BZM5</accession>
<accession>Q5VUN4</accession>
<sequence>MAAAAATKILLCLPLLLLLSGWSRAGRADPHSLCYDITVIPKFRPGPRWCAVQGQVDEKTFLHYDCGNKTVTPVSPLGKKLNVTTAWKAQNPVLREVVDILTEQLRDIQLENYTPKEPLTLQARMSCEQKAEGHSSGSWQFSFDGQIFLLFDSEKRMWTTVHPGARKMKEKWENDKVVAMSFHYFSMGDCIGWLEDFLMGMDSTLEPSAGAPLAMSSGTTQLRATATTLILCCLLIILPCFILPGI</sequence>
<feature type="signal peptide" evidence="4">
    <location>
        <begin position="1"/>
        <end position="25"/>
    </location>
</feature>
<feature type="chain" id="PRO_0000019017" description="UL16-binding protein 2">
    <location>
        <begin position="26"/>
        <end position="217"/>
    </location>
</feature>
<feature type="propeptide" id="PRO_0000019018" description="Removed in mature form" evidence="9">
    <location>
        <begin position="218"/>
        <end position="246"/>
    </location>
</feature>
<feature type="region of interest" description="MHC class I alpha-1 like">
    <location>
        <begin position="29"/>
        <end position="117"/>
    </location>
</feature>
<feature type="region of interest" description="MHC class I alpha-2 like">
    <location>
        <begin position="118"/>
        <end position="210"/>
    </location>
</feature>
<feature type="binding site" evidence="7 13">
    <location>
        <position position="216"/>
    </location>
    <ligand>
        <name>a protein</name>
        <dbReference type="ChEBI" id="CHEBI:16541"/>
    </ligand>
    <ligandPart>
        <name>L-serine residue</name>
        <dbReference type="ChEBI" id="CHEBI:29999"/>
    </ligandPart>
</feature>
<feature type="lipid moiety-binding region" description="GPI-anchor amidated serine" evidence="7 11 12">
    <location>
        <position position="217"/>
    </location>
</feature>
<feature type="glycosylation site" description="N-linked (GlcNAc...) asparagine" evidence="2">
    <location>
        <position position="68"/>
    </location>
</feature>
<feature type="glycosylation site" description="N-linked (GlcNAc...) asparagine" evidence="2">
    <location>
        <position position="82"/>
    </location>
</feature>
<feature type="disulfide bond" evidence="1">
    <location>
        <begin position="50"/>
        <end position="66"/>
    </location>
</feature>
<feature type="disulfide bond" evidence="1">
    <location>
        <begin position="127"/>
        <end position="190"/>
    </location>
</feature>
<feature type="mutagenesis site" description="Secreted." evidence="4">
    <original>SAG</original>
    <variation>TPV</variation>
    <location>
        <begin position="208"/>
        <end position="210"/>
    </location>
</feature>
<feature type="mutagenesis site" description="Not secreted." evidence="4">
    <original>SSG</original>
    <variation>TPV</variation>
    <location>
        <begin position="216"/>
        <end position="218"/>
    </location>
</feature>
<feature type="mutagenesis site" description="Does not affect GPI-anchor attachment. Loss of GPI-anchor attachment; when associated with Q-217." evidence="7">
    <original>S</original>
    <variation>Q</variation>
    <location>
        <position position="216"/>
    </location>
</feature>
<feature type="mutagenesis site" description="Does not affect GPI-anchor attachment. Loss of GPI-anchor attachment; when associated with Q-216." evidence="7">
    <original>S</original>
    <variation>Q</variation>
    <location>
        <position position="217"/>
    </location>
</feature>
<feature type="turn" evidence="15">
    <location>
        <begin position="226"/>
        <end position="229"/>
    </location>
</feature>
<feature type="helix" evidence="15">
    <location>
        <begin position="230"/>
        <end position="235"/>
    </location>
</feature>
<feature type="helix" evidence="15">
    <location>
        <begin position="238"/>
        <end position="241"/>
    </location>
</feature>
<proteinExistence type="evidence at protein level"/>
<organism>
    <name type="scientific">Homo sapiens</name>
    <name type="common">Human</name>
    <dbReference type="NCBI Taxonomy" id="9606"/>
    <lineage>
        <taxon>Eukaryota</taxon>
        <taxon>Metazoa</taxon>
        <taxon>Chordata</taxon>
        <taxon>Craniata</taxon>
        <taxon>Vertebrata</taxon>
        <taxon>Euteleostomi</taxon>
        <taxon>Mammalia</taxon>
        <taxon>Eutheria</taxon>
        <taxon>Euarchontoglires</taxon>
        <taxon>Primates</taxon>
        <taxon>Haplorrhini</taxon>
        <taxon>Catarrhini</taxon>
        <taxon>Hominidae</taxon>
        <taxon>Homo</taxon>
    </lineage>
</organism>
<name>ULBP2_HUMAN</name>
<dbReference type="EMBL" id="AF304378">
    <property type="protein sequence ID" value="AAK13082.1"/>
    <property type="molecule type" value="mRNA"/>
</dbReference>
<dbReference type="EMBL" id="AB052906">
    <property type="protein sequence ID" value="BAB61048.1"/>
    <property type="molecule type" value="mRNA"/>
</dbReference>
<dbReference type="EMBL" id="AY026825">
    <property type="protein sequence ID" value="AAK07688.1"/>
    <property type="molecule type" value="mRNA"/>
</dbReference>
<dbReference type="EMBL" id="AY358665">
    <property type="protein sequence ID" value="AAQ89028.1"/>
    <property type="molecule type" value="mRNA"/>
</dbReference>
<dbReference type="EMBL" id="AL583835">
    <property type="status" value="NOT_ANNOTATED_CDS"/>
    <property type="molecule type" value="Genomic_DNA"/>
</dbReference>
<dbReference type="EMBL" id="CH471051">
    <property type="protein sequence ID" value="EAW47777.1"/>
    <property type="molecule type" value="Genomic_DNA"/>
</dbReference>
<dbReference type="EMBL" id="BC034689">
    <property type="protein sequence ID" value="AAH34689.1"/>
    <property type="molecule type" value="mRNA"/>
</dbReference>
<dbReference type="CCDS" id="CCDS5222.1"/>
<dbReference type="RefSeq" id="NP_079493.1">
    <property type="nucleotide sequence ID" value="NM_025217.4"/>
</dbReference>
<dbReference type="RefSeq" id="XP_047275333.1">
    <property type="nucleotide sequence ID" value="XM_047419377.1"/>
</dbReference>
<dbReference type="RefSeq" id="XP_054212441.1">
    <property type="nucleotide sequence ID" value="XM_054356466.1"/>
</dbReference>
<dbReference type="PDB" id="8IMX">
    <property type="method" value="EM"/>
    <property type="resolution" value="2.85 A"/>
    <property type="chains" value="D=1-176, D=208-246"/>
</dbReference>
<dbReference type="PDB" id="8IMY">
    <property type="method" value="EM"/>
    <property type="resolution" value="3.22 A"/>
    <property type="chains" value="D=1-246"/>
</dbReference>
<dbReference type="PDBsum" id="8IMX"/>
<dbReference type="PDBsum" id="8IMY"/>
<dbReference type="EMDB" id="EMD-35575"/>
<dbReference type="EMDB" id="EMD-35576"/>
<dbReference type="SMR" id="Q9BZM5"/>
<dbReference type="BioGRID" id="123240">
    <property type="interactions" value="30"/>
</dbReference>
<dbReference type="CORUM" id="Q9BZM5"/>
<dbReference type="FunCoup" id="Q9BZM5">
    <property type="interactions" value="468"/>
</dbReference>
<dbReference type="IntAct" id="Q9BZM5">
    <property type="interactions" value="25"/>
</dbReference>
<dbReference type="STRING" id="9606.ENSP00000356320"/>
<dbReference type="GlyCosmos" id="Q9BZM5">
    <property type="glycosylation" value="2 sites, No reported glycans"/>
</dbReference>
<dbReference type="GlyGen" id="Q9BZM5">
    <property type="glycosylation" value="2 sites, 2 N-linked glycans (2 sites)"/>
</dbReference>
<dbReference type="iPTMnet" id="Q9BZM5"/>
<dbReference type="PhosphoSitePlus" id="Q9BZM5"/>
<dbReference type="BioMuta" id="ULBP2"/>
<dbReference type="jPOST" id="Q9BZM5"/>
<dbReference type="MassIVE" id="Q9BZM5"/>
<dbReference type="PaxDb" id="9606-ENSP00000356320"/>
<dbReference type="PeptideAtlas" id="Q9BZM5"/>
<dbReference type="ProteomicsDB" id="79878"/>
<dbReference type="Pumba" id="Q9BZM5"/>
<dbReference type="Antibodypedia" id="33306">
    <property type="antibodies" value="241 antibodies from 29 providers"/>
</dbReference>
<dbReference type="DNASU" id="80328"/>
<dbReference type="Ensembl" id="ENST00000367351.4">
    <property type="protein sequence ID" value="ENSP00000356320.3"/>
    <property type="gene ID" value="ENSG00000131015.5"/>
</dbReference>
<dbReference type="GeneID" id="80328"/>
<dbReference type="KEGG" id="hsa:80328"/>
<dbReference type="MANE-Select" id="ENST00000367351.4">
    <property type="protein sequence ID" value="ENSP00000356320.3"/>
    <property type="RefSeq nucleotide sequence ID" value="NM_025217.4"/>
    <property type="RefSeq protein sequence ID" value="NP_079493.1"/>
</dbReference>
<dbReference type="UCSC" id="uc003qno.4">
    <property type="organism name" value="human"/>
</dbReference>
<dbReference type="AGR" id="HGNC:14894"/>
<dbReference type="CTD" id="80328"/>
<dbReference type="DisGeNET" id="80328"/>
<dbReference type="GeneCards" id="ULBP2"/>
<dbReference type="HGNC" id="HGNC:14894">
    <property type="gene designation" value="ULBP2"/>
</dbReference>
<dbReference type="HPA" id="ENSG00000131015">
    <property type="expression patterns" value="Tissue enhanced (esophagus)"/>
</dbReference>
<dbReference type="MIM" id="605698">
    <property type="type" value="gene"/>
</dbReference>
<dbReference type="neXtProt" id="NX_Q9BZM5"/>
<dbReference type="OpenTargets" id="ENSG00000131015"/>
<dbReference type="PharmGKB" id="PA37916"/>
<dbReference type="VEuPathDB" id="HostDB:ENSG00000131015"/>
<dbReference type="eggNOG" id="ENOG502TM6M">
    <property type="taxonomic scope" value="Eukaryota"/>
</dbReference>
<dbReference type="GeneTree" id="ENSGT01130000278293"/>
<dbReference type="HOGENOM" id="CLU_086235_0_0_1"/>
<dbReference type="InParanoid" id="Q9BZM5"/>
<dbReference type="OMA" id="HYISMAD"/>
<dbReference type="OrthoDB" id="9836934at2759"/>
<dbReference type="PAN-GO" id="Q9BZM5">
    <property type="GO annotations" value="3 GO annotations based on evolutionary models"/>
</dbReference>
<dbReference type="PhylomeDB" id="Q9BZM5"/>
<dbReference type="TreeFam" id="TF341724"/>
<dbReference type="PathwayCommons" id="Q9BZM5"/>
<dbReference type="Reactome" id="R-HSA-163125">
    <property type="pathway name" value="Post-translational modification: synthesis of GPI-anchored proteins"/>
</dbReference>
<dbReference type="SignaLink" id="Q9BZM5"/>
<dbReference type="SIGNOR" id="Q9BZM5"/>
<dbReference type="BioGRID-ORCS" id="80328">
    <property type="hits" value="33 hits in 1123 CRISPR screens"/>
</dbReference>
<dbReference type="GeneWiki" id="ULBP2"/>
<dbReference type="GenomeRNAi" id="80328"/>
<dbReference type="Pharos" id="Q9BZM5">
    <property type="development level" value="Tbio"/>
</dbReference>
<dbReference type="PRO" id="PR:Q9BZM5"/>
<dbReference type="Proteomes" id="UP000005640">
    <property type="component" value="Chromosome 6"/>
</dbReference>
<dbReference type="RNAct" id="Q9BZM5">
    <property type="molecule type" value="protein"/>
</dbReference>
<dbReference type="Bgee" id="ENSG00000131015">
    <property type="expression patterns" value="Expressed in esophagus squamous epithelium and 128 other cell types or tissues"/>
</dbReference>
<dbReference type="GO" id="GO:0009986">
    <property type="term" value="C:cell surface"/>
    <property type="evidence" value="ECO:0000314"/>
    <property type="project" value="BHF-UCL"/>
</dbReference>
<dbReference type="GO" id="GO:0005783">
    <property type="term" value="C:endoplasmic reticulum"/>
    <property type="evidence" value="ECO:0007669"/>
    <property type="project" value="UniProtKB-SubCell"/>
</dbReference>
<dbReference type="GO" id="GO:0009897">
    <property type="term" value="C:external side of plasma membrane"/>
    <property type="evidence" value="ECO:0000318"/>
    <property type="project" value="GO_Central"/>
</dbReference>
<dbReference type="GO" id="GO:0005576">
    <property type="term" value="C:extracellular region"/>
    <property type="evidence" value="ECO:0000304"/>
    <property type="project" value="Reactome"/>
</dbReference>
<dbReference type="GO" id="GO:0005615">
    <property type="term" value="C:extracellular space"/>
    <property type="evidence" value="ECO:0000314"/>
    <property type="project" value="BHF-UCL"/>
</dbReference>
<dbReference type="GO" id="GO:0043231">
    <property type="term" value="C:intracellular membrane-bounded organelle"/>
    <property type="evidence" value="ECO:0000314"/>
    <property type="project" value="HPA"/>
</dbReference>
<dbReference type="GO" id="GO:0005886">
    <property type="term" value="C:plasma membrane"/>
    <property type="evidence" value="ECO:0000314"/>
    <property type="project" value="UniProtKB"/>
</dbReference>
<dbReference type="GO" id="GO:0034235">
    <property type="term" value="F:GPI anchor binding"/>
    <property type="evidence" value="ECO:0000314"/>
    <property type="project" value="UniProtKB"/>
</dbReference>
<dbReference type="GO" id="GO:0046703">
    <property type="term" value="F:natural killer cell lectin-like receptor binding"/>
    <property type="evidence" value="ECO:0000314"/>
    <property type="project" value="UniProtKB"/>
</dbReference>
<dbReference type="GO" id="GO:0048018">
    <property type="term" value="F:receptor ligand activity"/>
    <property type="evidence" value="ECO:0000314"/>
    <property type="project" value="UniProt"/>
</dbReference>
<dbReference type="GO" id="GO:0002486">
    <property type="term" value="P:antigen processing and presentation of endogenous peptide antigen via MHC class I via ER pathway, TAP-independent"/>
    <property type="evidence" value="ECO:0000318"/>
    <property type="project" value="GO_Central"/>
</dbReference>
<dbReference type="GO" id="GO:0002476">
    <property type="term" value="P:antigen processing and presentation of endogenous peptide antigen via MHC class Ib"/>
    <property type="evidence" value="ECO:0000318"/>
    <property type="project" value="GO_Central"/>
</dbReference>
<dbReference type="GO" id="GO:0006955">
    <property type="term" value="P:immune response"/>
    <property type="evidence" value="ECO:0000318"/>
    <property type="project" value="GO_Central"/>
</dbReference>
<dbReference type="GO" id="GO:0030101">
    <property type="term" value="P:natural killer cell activation"/>
    <property type="evidence" value="ECO:0000314"/>
    <property type="project" value="UniProtKB"/>
</dbReference>
<dbReference type="GO" id="GO:0042267">
    <property type="term" value="P:natural killer cell mediated cytotoxicity"/>
    <property type="evidence" value="ECO:0000314"/>
    <property type="project" value="UniProtKB"/>
</dbReference>
<dbReference type="GO" id="GO:0001916">
    <property type="term" value="P:positive regulation of T cell mediated cytotoxicity"/>
    <property type="evidence" value="ECO:0000318"/>
    <property type="project" value="GO_Central"/>
</dbReference>
<dbReference type="FunFam" id="3.30.500.10:FF:000004">
    <property type="entry name" value="Retinoic acid early-inducible protein 1-beta"/>
    <property type="match status" value="1"/>
</dbReference>
<dbReference type="Gene3D" id="3.30.500.10">
    <property type="entry name" value="MHC class I-like antigen recognition-like"/>
    <property type="match status" value="1"/>
</dbReference>
<dbReference type="InterPro" id="IPR050208">
    <property type="entry name" value="MHC_class-I_related"/>
</dbReference>
<dbReference type="InterPro" id="IPR011161">
    <property type="entry name" value="MHC_I-like_Ag-recog"/>
</dbReference>
<dbReference type="InterPro" id="IPR037055">
    <property type="entry name" value="MHC_I-like_Ag-recog_sf"/>
</dbReference>
<dbReference type="InterPro" id="IPR011162">
    <property type="entry name" value="MHC_I/II-like_Ag-recog"/>
</dbReference>
<dbReference type="PANTHER" id="PTHR16675">
    <property type="entry name" value="MHC CLASS I-RELATED"/>
    <property type="match status" value="1"/>
</dbReference>
<dbReference type="PANTHER" id="PTHR16675:SF148">
    <property type="entry name" value="UL16-BINDING PROTEIN 2-RELATED"/>
    <property type="match status" value="1"/>
</dbReference>
<dbReference type="Pfam" id="PF00129">
    <property type="entry name" value="MHC_I"/>
    <property type="match status" value="1"/>
</dbReference>
<dbReference type="SUPFAM" id="SSF54452">
    <property type="entry name" value="MHC antigen-recognition domain"/>
    <property type="match status" value="1"/>
</dbReference>